<proteinExistence type="inferred from homology"/>
<protein>
    <recommendedName>
        <fullName evidence="1">2-aminoethylphosphonate--pyruvate transaminase</fullName>
        <ecNumber evidence="1">2.6.1.37</ecNumber>
    </recommendedName>
    <alternativeName>
        <fullName evidence="1">2-aminoethylphosphonate aminotransferase</fullName>
    </alternativeName>
    <alternativeName>
        <fullName evidence="1">AEP transaminase</fullName>
        <shortName evidence="1">AEPT</shortName>
    </alternativeName>
</protein>
<comment type="function">
    <text evidence="1">Involved in phosphonate degradation.</text>
</comment>
<comment type="catalytic activity">
    <reaction evidence="1">
        <text>(2-aminoethyl)phosphonate + pyruvate = phosphonoacetaldehyde + L-alanine</text>
        <dbReference type="Rhea" id="RHEA:17021"/>
        <dbReference type="ChEBI" id="CHEBI:15361"/>
        <dbReference type="ChEBI" id="CHEBI:57418"/>
        <dbReference type="ChEBI" id="CHEBI:57972"/>
        <dbReference type="ChEBI" id="CHEBI:58383"/>
        <dbReference type="EC" id="2.6.1.37"/>
    </reaction>
</comment>
<comment type="cofactor">
    <cofactor evidence="1">
        <name>pyridoxal 5'-phosphate</name>
        <dbReference type="ChEBI" id="CHEBI:597326"/>
    </cofactor>
</comment>
<comment type="subunit">
    <text evidence="1">Homodimer.</text>
</comment>
<comment type="similarity">
    <text evidence="1">Belongs to the class-V pyridoxal-phosphate-dependent aminotransferase family. PhnW subfamily.</text>
</comment>
<gene>
    <name evidence="1" type="primary">phnW</name>
    <name type="ordered locus">BT9727_1216</name>
</gene>
<feature type="chain" id="PRO_0000286758" description="2-aminoethylphosphonate--pyruvate transaminase">
    <location>
        <begin position="1"/>
        <end position="365"/>
    </location>
</feature>
<feature type="modified residue" description="N6-(pyridoxal phosphate)lysine" evidence="1">
    <location>
        <position position="194"/>
    </location>
</feature>
<organism>
    <name type="scientific">Bacillus thuringiensis subsp. konkukian (strain 97-27)</name>
    <dbReference type="NCBI Taxonomy" id="281309"/>
    <lineage>
        <taxon>Bacteria</taxon>
        <taxon>Bacillati</taxon>
        <taxon>Bacillota</taxon>
        <taxon>Bacilli</taxon>
        <taxon>Bacillales</taxon>
        <taxon>Bacillaceae</taxon>
        <taxon>Bacillus</taxon>
        <taxon>Bacillus cereus group</taxon>
    </lineage>
</organism>
<dbReference type="EC" id="2.6.1.37" evidence="1"/>
<dbReference type="EMBL" id="AE017355">
    <property type="protein sequence ID" value="AAT61976.1"/>
    <property type="molecule type" value="Genomic_DNA"/>
</dbReference>
<dbReference type="RefSeq" id="WP_000138251.1">
    <property type="nucleotide sequence ID" value="NC_005957.1"/>
</dbReference>
<dbReference type="RefSeq" id="YP_035551.1">
    <property type="nucleotide sequence ID" value="NC_005957.1"/>
</dbReference>
<dbReference type="SMR" id="Q6HLM0"/>
<dbReference type="GeneID" id="45021330"/>
<dbReference type="KEGG" id="btk:BT9727_1216"/>
<dbReference type="PATRIC" id="fig|281309.8.peg.1279"/>
<dbReference type="HOGENOM" id="CLU_027686_3_1_9"/>
<dbReference type="Proteomes" id="UP000001301">
    <property type="component" value="Chromosome"/>
</dbReference>
<dbReference type="GO" id="GO:0047304">
    <property type="term" value="F:2-aminoethylphosphonate-pyruvate transaminase activity"/>
    <property type="evidence" value="ECO:0007669"/>
    <property type="project" value="UniProtKB-UniRule"/>
</dbReference>
<dbReference type="GO" id="GO:0019700">
    <property type="term" value="P:organic phosphonate catabolic process"/>
    <property type="evidence" value="ECO:0007669"/>
    <property type="project" value="InterPro"/>
</dbReference>
<dbReference type="Gene3D" id="3.90.1150.10">
    <property type="entry name" value="Aspartate Aminotransferase, domain 1"/>
    <property type="match status" value="1"/>
</dbReference>
<dbReference type="Gene3D" id="3.40.640.10">
    <property type="entry name" value="Type I PLP-dependent aspartate aminotransferase-like (Major domain)"/>
    <property type="match status" value="1"/>
</dbReference>
<dbReference type="HAMAP" id="MF_01376">
    <property type="entry name" value="PhnW_aminotrans_5"/>
    <property type="match status" value="1"/>
</dbReference>
<dbReference type="InterPro" id="IPR000192">
    <property type="entry name" value="Aminotrans_V_dom"/>
</dbReference>
<dbReference type="InterPro" id="IPR012703">
    <property type="entry name" value="NH2EtPonate_pyrv_transaminase"/>
</dbReference>
<dbReference type="InterPro" id="IPR015424">
    <property type="entry name" value="PyrdxlP-dep_Trfase"/>
</dbReference>
<dbReference type="InterPro" id="IPR015421">
    <property type="entry name" value="PyrdxlP-dep_Trfase_major"/>
</dbReference>
<dbReference type="InterPro" id="IPR015422">
    <property type="entry name" value="PyrdxlP-dep_Trfase_small"/>
</dbReference>
<dbReference type="InterPro" id="IPR024169">
    <property type="entry name" value="SP_NH2Trfase/AEP_transaminase"/>
</dbReference>
<dbReference type="NCBIfam" id="TIGR03301">
    <property type="entry name" value="PhnW-AepZ"/>
    <property type="match status" value="1"/>
</dbReference>
<dbReference type="NCBIfam" id="NF010006">
    <property type="entry name" value="PRK13479.1"/>
    <property type="match status" value="1"/>
</dbReference>
<dbReference type="NCBIfam" id="TIGR02326">
    <property type="entry name" value="transamin_PhnW"/>
    <property type="match status" value="1"/>
</dbReference>
<dbReference type="PANTHER" id="PTHR42778">
    <property type="entry name" value="2-AMINOETHYLPHOSPHONATE--PYRUVATE TRANSAMINASE"/>
    <property type="match status" value="1"/>
</dbReference>
<dbReference type="PANTHER" id="PTHR42778:SF1">
    <property type="entry name" value="2-AMINOETHYLPHOSPHONATE--PYRUVATE TRANSAMINASE"/>
    <property type="match status" value="1"/>
</dbReference>
<dbReference type="Pfam" id="PF00266">
    <property type="entry name" value="Aminotran_5"/>
    <property type="match status" value="1"/>
</dbReference>
<dbReference type="PIRSF" id="PIRSF000524">
    <property type="entry name" value="SPT"/>
    <property type="match status" value="1"/>
</dbReference>
<dbReference type="SUPFAM" id="SSF53383">
    <property type="entry name" value="PLP-dependent transferases"/>
    <property type="match status" value="1"/>
</dbReference>
<keyword id="KW-0032">Aminotransferase</keyword>
<keyword id="KW-0663">Pyridoxal phosphate</keyword>
<keyword id="KW-0670">Pyruvate</keyword>
<keyword id="KW-0808">Transferase</keyword>
<reference key="1">
    <citation type="journal article" date="2006" name="J. Bacteriol.">
        <title>Pathogenomic sequence analysis of Bacillus cereus and Bacillus thuringiensis isolates closely related to Bacillus anthracis.</title>
        <authorList>
            <person name="Han C.S."/>
            <person name="Xie G."/>
            <person name="Challacombe J.F."/>
            <person name="Altherr M.R."/>
            <person name="Bhotika S.S."/>
            <person name="Bruce D."/>
            <person name="Campbell C.S."/>
            <person name="Campbell M.L."/>
            <person name="Chen J."/>
            <person name="Chertkov O."/>
            <person name="Cleland C."/>
            <person name="Dimitrijevic M."/>
            <person name="Doggett N.A."/>
            <person name="Fawcett J.J."/>
            <person name="Glavina T."/>
            <person name="Goodwin L.A."/>
            <person name="Hill K.K."/>
            <person name="Hitchcock P."/>
            <person name="Jackson P.J."/>
            <person name="Keim P."/>
            <person name="Kewalramani A.R."/>
            <person name="Longmire J."/>
            <person name="Lucas S."/>
            <person name="Malfatti S."/>
            <person name="McMurry K."/>
            <person name="Meincke L.J."/>
            <person name="Misra M."/>
            <person name="Moseman B.L."/>
            <person name="Mundt M."/>
            <person name="Munk A.C."/>
            <person name="Okinaka R.T."/>
            <person name="Parson-Quintana B."/>
            <person name="Reilly L.P."/>
            <person name="Richardson P."/>
            <person name="Robinson D.L."/>
            <person name="Rubin E."/>
            <person name="Saunders E."/>
            <person name="Tapia R."/>
            <person name="Tesmer J.G."/>
            <person name="Thayer N."/>
            <person name="Thompson L.S."/>
            <person name="Tice H."/>
            <person name="Ticknor L.O."/>
            <person name="Wills P.L."/>
            <person name="Brettin T.S."/>
            <person name="Gilna P."/>
        </authorList>
    </citation>
    <scope>NUCLEOTIDE SEQUENCE [LARGE SCALE GENOMIC DNA]</scope>
    <source>
        <strain>97-27</strain>
    </source>
</reference>
<name>PHNW_BACHK</name>
<sequence length="365" mass="41298">MTENHYLLLTPGPLTTTKTVKEVMLYDWCTWDVEYNTMVQKVRAKLVSLATKEEEKYTTVLMQGSGTFSVEAVIGSVIPKNGKLLVCTNGAYGKRIVQMAEMLHIDVVVSQTEEWEPTNIVEVEKILQQDKEITHIAVVHCETTTGIINPIVDVCKLGKQYGKVTLVDAMSSFGGIEIDIAELQIDFLISSANKCIQGVPGFGFVIAQRDELLKCKGQARSLSLDLYDQWETMENQNGKWRFTSPTHVVHAFYQALLELEKEGGVRARYNRYYNNQKLLVNRMGEIGFKPLVNEKYQSPIITSFIYPEGNFEFQQLYNELKRYGFVIYPGKISKVDTFRIGNIGDVHEEDINRLVDSIAKGVVIG</sequence>
<accession>Q6HLM0</accession>
<evidence type="ECO:0000255" key="1">
    <source>
        <dbReference type="HAMAP-Rule" id="MF_01376"/>
    </source>
</evidence>